<feature type="chain" id="PRO_0000386945" description="Ribosomal RNA small subunit methyltransferase H">
    <location>
        <begin position="1"/>
        <end position="315"/>
    </location>
</feature>
<feature type="region of interest" description="Disordered" evidence="2">
    <location>
        <begin position="295"/>
        <end position="315"/>
    </location>
</feature>
<feature type="binding site" evidence="1">
    <location>
        <begin position="33"/>
        <end position="35"/>
    </location>
    <ligand>
        <name>S-adenosyl-L-methionine</name>
        <dbReference type="ChEBI" id="CHEBI:59789"/>
    </ligand>
</feature>
<feature type="binding site" evidence="1">
    <location>
        <position position="52"/>
    </location>
    <ligand>
        <name>S-adenosyl-L-methionine</name>
        <dbReference type="ChEBI" id="CHEBI:59789"/>
    </ligand>
</feature>
<feature type="binding site" evidence="1">
    <location>
        <position position="84"/>
    </location>
    <ligand>
        <name>S-adenosyl-L-methionine</name>
        <dbReference type="ChEBI" id="CHEBI:59789"/>
    </ligand>
</feature>
<feature type="binding site" evidence="1">
    <location>
        <position position="106"/>
    </location>
    <ligand>
        <name>S-adenosyl-L-methionine</name>
        <dbReference type="ChEBI" id="CHEBI:59789"/>
    </ligand>
</feature>
<feature type="binding site" evidence="1">
    <location>
        <position position="113"/>
    </location>
    <ligand>
        <name>S-adenosyl-L-methionine</name>
        <dbReference type="ChEBI" id="CHEBI:59789"/>
    </ligand>
</feature>
<name>RSMH_LACGA</name>
<proteinExistence type="inferred from homology"/>
<sequence>MKFKHKSVLLHETIDNLNPKDDGLYVDATFGGGGHARYLLSKLNRGTVIGFDQDEYAISMAKESFAEELKPGAEPKLILVHDNFCHLKENLVELGISDGIDGIYYDLGVSSPQFDQPERGFSYRFDARLDMRMDQSQELDAYTIVNTWSQKELSDILYKYGDEKFSRQIARKIVDRRREKPIVTTFDLVDVIKDAIPAYARRSGGHPAKKSFQAIRVAVNNELGVLQESLEEAIKLLKPGGRISVITFQSHEDKIVKKIFKKYSEVEIPRGMPMIPADSKPTLRLISRKPIMASSDELEENNRSHSAKLRVAEKL</sequence>
<dbReference type="EC" id="2.1.1.199" evidence="1"/>
<dbReference type="EMBL" id="CP000413">
    <property type="protein sequence ID" value="ABJ60578.1"/>
    <property type="molecule type" value="Genomic_DNA"/>
</dbReference>
<dbReference type="RefSeq" id="WP_003647098.1">
    <property type="nucleotide sequence ID" value="NZ_WBMG01000002.1"/>
</dbReference>
<dbReference type="SMR" id="Q042P4"/>
<dbReference type="GeneID" id="29639607"/>
<dbReference type="KEGG" id="lga:LGAS_1209"/>
<dbReference type="HOGENOM" id="CLU_038422_2_0_9"/>
<dbReference type="BioCyc" id="LGAS324831:G1G6Y-1205-MONOMER"/>
<dbReference type="Proteomes" id="UP000000664">
    <property type="component" value="Chromosome"/>
</dbReference>
<dbReference type="GO" id="GO:0005737">
    <property type="term" value="C:cytoplasm"/>
    <property type="evidence" value="ECO:0007669"/>
    <property type="project" value="UniProtKB-SubCell"/>
</dbReference>
<dbReference type="GO" id="GO:0071424">
    <property type="term" value="F:rRNA (cytosine-N4-)-methyltransferase activity"/>
    <property type="evidence" value="ECO:0007669"/>
    <property type="project" value="UniProtKB-UniRule"/>
</dbReference>
<dbReference type="GO" id="GO:0070475">
    <property type="term" value="P:rRNA base methylation"/>
    <property type="evidence" value="ECO:0007669"/>
    <property type="project" value="UniProtKB-UniRule"/>
</dbReference>
<dbReference type="FunFam" id="1.10.150.170:FF:000001">
    <property type="entry name" value="Ribosomal RNA small subunit methyltransferase H"/>
    <property type="match status" value="1"/>
</dbReference>
<dbReference type="Gene3D" id="1.10.150.170">
    <property type="entry name" value="Putative methyltransferase TM0872, insert domain"/>
    <property type="match status" value="1"/>
</dbReference>
<dbReference type="Gene3D" id="3.40.50.150">
    <property type="entry name" value="Vaccinia Virus protein VP39"/>
    <property type="match status" value="1"/>
</dbReference>
<dbReference type="HAMAP" id="MF_01007">
    <property type="entry name" value="16SrRNA_methyltr_H"/>
    <property type="match status" value="1"/>
</dbReference>
<dbReference type="InterPro" id="IPR002903">
    <property type="entry name" value="RsmH"/>
</dbReference>
<dbReference type="InterPro" id="IPR023397">
    <property type="entry name" value="SAM-dep_MeTrfase_MraW_recog"/>
</dbReference>
<dbReference type="InterPro" id="IPR029063">
    <property type="entry name" value="SAM-dependent_MTases_sf"/>
</dbReference>
<dbReference type="NCBIfam" id="TIGR00006">
    <property type="entry name" value="16S rRNA (cytosine(1402)-N(4))-methyltransferase RsmH"/>
    <property type="match status" value="1"/>
</dbReference>
<dbReference type="PANTHER" id="PTHR11265:SF0">
    <property type="entry name" value="12S RRNA N4-METHYLCYTIDINE METHYLTRANSFERASE"/>
    <property type="match status" value="1"/>
</dbReference>
<dbReference type="PANTHER" id="PTHR11265">
    <property type="entry name" value="S-ADENOSYL-METHYLTRANSFERASE MRAW"/>
    <property type="match status" value="1"/>
</dbReference>
<dbReference type="Pfam" id="PF01795">
    <property type="entry name" value="Methyltransf_5"/>
    <property type="match status" value="1"/>
</dbReference>
<dbReference type="PIRSF" id="PIRSF004486">
    <property type="entry name" value="MraW"/>
    <property type="match status" value="1"/>
</dbReference>
<dbReference type="SUPFAM" id="SSF81799">
    <property type="entry name" value="Putative methyltransferase TM0872, insert domain"/>
    <property type="match status" value="1"/>
</dbReference>
<dbReference type="SUPFAM" id="SSF53335">
    <property type="entry name" value="S-adenosyl-L-methionine-dependent methyltransferases"/>
    <property type="match status" value="1"/>
</dbReference>
<gene>
    <name evidence="1" type="primary">rsmH</name>
    <name type="synonym">mraW</name>
    <name type="ordered locus">LGAS_1209</name>
</gene>
<comment type="function">
    <text evidence="1">Specifically methylates the N4 position of cytidine in position 1402 (C1402) of 16S rRNA.</text>
</comment>
<comment type="catalytic activity">
    <reaction evidence="1">
        <text>cytidine(1402) in 16S rRNA + S-adenosyl-L-methionine = N(4)-methylcytidine(1402) in 16S rRNA + S-adenosyl-L-homocysteine + H(+)</text>
        <dbReference type="Rhea" id="RHEA:42928"/>
        <dbReference type="Rhea" id="RHEA-COMP:10286"/>
        <dbReference type="Rhea" id="RHEA-COMP:10287"/>
        <dbReference type="ChEBI" id="CHEBI:15378"/>
        <dbReference type="ChEBI" id="CHEBI:57856"/>
        <dbReference type="ChEBI" id="CHEBI:59789"/>
        <dbReference type="ChEBI" id="CHEBI:74506"/>
        <dbReference type="ChEBI" id="CHEBI:82748"/>
        <dbReference type="EC" id="2.1.1.199"/>
    </reaction>
</comment>
<comment type="subcellular location">
    <subcellularLocation>
        <location evidence="1">Cytoplasm</location>
    </subcellularLocation>
</comment>
<comment type="similarity">
    <text evidence="1">Belongs to the methyltransferase superfamily. RsmH family.</text>
</comment>
<evidence type="ECO:0000255" key="1">
    <source>
        <dbReference type="HAMAP-Rule" id="MF_01007"/>
    </source>
</evidence>
<evidence type="ECO:0000256" key="2">
    <source>
        <dbReference type="SAM" id="MobiDB-lite"/>
    </source>
</evidence>
<organism>
    <name type="scientific">Lactobacillus gasseri (strain ATCC 33323 / DSM 20243 / BCRC 14619 / CIP 102991 / JCM 1131 / KCTC 3163 / NCIMB 11718 / NCTC 13722 / AM63)</name>
    <dbReference type="NCBI Taxonomy" id="324831"/>
    <lineage>
        <taxon>Bacteria</taxon>
        <taxon>Bacillati</taxon>
        <taxon>Bacillota</taxon>
        <taxon>Bacilli</taxon>
        <taxon>Lactobacillales</taxon>
        <taxon>Lactobacillaceae</taxon>
        <taxon>Lactobacillus</taxon>
    </lineage>
</organism>
<protein>
    <recommendedName>
        <fullName evidence="1">Ribosomal RNA small subunit methyltransferase H</fullName>
        <ecNumber evidence="1">2.1.1.199</ecNumber>
    </recommendedName>
    <alternativeName>
        <fullName evidence="1">16S rRNA m(4)C1402 methyltransferase</fullName>
    </alternativeName>
    <alternativeName>
        <fullName evidence="1">rRNA (cytosine-N(4)-)-methyltransferase RsmH</fullName>
    </alternativeName>
</protein>
<keyword id="KW-0963">Cytoplasm</keyword>
<keyword id="KW-0489">Methyltransferase</keyword>
<keyword id="KW-0698">rRNA processing</keyword>
<keyword id="KW-0949">S-adenosyl-L-methionine</keyword>
<keyword id="KW-0808">Transferase</keyword>
<reference key="1">
    <citation type="journal article" date="2006" name="Proc. Natl. Acad. Sci. U.S.A.">
        <title>Comparative genomics of the lactic acid bacteria.</title>
        <authorList>
            <person name="Makarova K.S."/>
            <person name="Slesarev A."/>
            <person name="Wolf Y.I."/>
            <person name="Sorokin A."/>
            <person name="Mirkin B."/>
            <person name="Koonin E.V."/>
            <person name="Pavlov A."/>
            <person name="Pavlova N."/>
            <person name="Karamychev V."/>
            <person name="Polouchine N."/>
            <person name="Shakhova V."/>
            <person name="Grigoriev I."/>
            <person name="Lou Y."/>
            <person name="Rohksar D."/>
            <person name="Lucas S."/>
            <person name="Huang K."/>
            <person name="Goodstein D.M."/>
            <person name="Hawkins T."/>
            <person name="Plengvidhya V."/>
            <person name="Welker D."/>
            <person name="Hughes J."/>
            <person name="Goh Y."/>
            <person name="Benson A."/>
            <person name="Baldwin K."/>
            <person name="Lee J.-H."/>
            <person name="Diaz-Muniz I."/>
            <person name="Dosti B."/>
            <person name="Smeianov V."/>
            <person name="Wechter W."/>
            <person name="Barabote R."/>
            <person name="Lorca G."/>
            <person name="Altermann E."/>
            <person name="Barrangou R."/>
            <person name="Ganesan B."/>
            <person name="Xie Y."/>
            <person name="Rawsthorne H."/>
            <person name="Tamir D."/>
            <person name="Parker C."/>
            <person name="Breidt F."/>
            <person name="Broadbent J.R."/>
            <person name="Hutkins R."/>
            <person name="O'Sullivan D."/>
            <person name="Steele J."/>
            <person name="Unlu G."/>
            <person name="Saier M.H. Jr."/>
            <person name="Klaenhammer T."/>
            <person name="Richardson P."/>
            <person name="Kozyavkin S."/>
            <person name="Weimer B.C."/>
            <person name="Mills D.A."/>
        </authorList>
    </citation>
    <scope>NUCLEOTIDE SEQUENCE [LARGE SCALE GENOMIC DNA]</scope>
    <source>
        <strain>ATCC 33323 / DSM 20243 / BCRC 14619 / CIP 102991 / JCM 1131 / KCTC 3163 / NCIMB 11718 / NCTC 13722 / AM63</strain>
    </source>
</reference>
<accession>Q042P4</accession>